<keyword id="KW-0150">Chloroplast</keyword>
<keyword id="KW-0275">Fatty acid biosynthesis</keyword>
<keyword id="KW-0276">Fatty acid metabolism</keyword>
<keyword id="KW-0408">Iron</keyword>
<keyword id="KW-0444">Lipid biosynthesis</keyword>
<keyword id="KW-0443">Lipid metabolism</keyword>
<keyword id="KW-0479">Metal-binding</keyword>
<keyword id="KW-0560">Oxidoreductase</keyword>
<keyword id="KW-0934">Plastid</keyword>
<keyword id="KW-0809">Transit peptide</keyword>
<reference key="1">
    <citation type="journal article" date="1992" name="Proc. Natl. Acad. Sci. U.S.A.">
        <title>Expression of a coriander desaturase results in petroselinic acid production in transgenic tobacco.</title>
        <authorList>
            <person name="Cahoon E.B."/>
            <person name="Shanklin J."/>
            <person name="Ohlrogge J.B."/>
        </authorList>
    </citation>
    <scope>NUCLEOTIDE SEQUENCE [MRNA]</scope>
    <scope>FUNCTION</scope>
    <source>
        <tissue>Endosperm</tissue>
    </source>
</reference>
<reference key="2">
    <citation type="journal article" date="1994" name="Plant Physiol.">
        <title>Metabolic evidence for the involvement of a Delta4-palmitoyl-acyl carrier protein desaturase in petroselinic acid synthesis in coriander endosperm and transgenic tobacco cells.</title>
        <authorList>
            <person name="Cahoon E.B."/>
            <person name="Ohlrogge J.B."/>
        </authorList>
    </citation>
    <scope>FUNCTION</scope>
    <scope>CATALYTIC ACTIVITY</scope>
</reference>
<comment type="function">
    <text evidence="3 4">Converts palmitoyl-ACP to (4Z)-hexadec-4-enoyl-ACP by introduction of a cis double bond between carbons 4 and 5 of the acyl chain.</text>
</comment>
<comment type="catalytic activity">
    <reaction evidence="3">
        <text>hexadecanoyl-[ACP] + 2 reduced [2Fe-2S]-[ferredoxin] + O2 + 2 H(+) = (4Z)-hexadecenoyl-[ACP] + 2 oxidized [2Fe-2S]-[ferredoxin] + 2 H2O</text>
        <dbReference type="Rhea" id="RHEA:38043"/>
        <dbReference type="Rhea" id="RHEA-COMP:9652"/>
        <dbReference type="Rhea" id="RHEA-COMP:10000"/>
        <dbReference type="Rhea" id="RHEA-COMP:10001"/>
        <dbReference type="Rhea" id="RHEA-COMP:11488"/>
        <dbReference type="ChEBI" id="CHEBI:15377"/>
        <dbReference type="ChEBI" id="CHEBI:15378"/>
        <dbReference type="ChEBI" id="CHEBI:15379"/>
        <dbReference type="ChEBI" id="CHEBI:33737"/>
        <dbReference type="ChEBI" id="CHEBI:33738"/>
        <dbReference type="ChEBI" id="CHEBI:78483"/>
        <dbReference type="ChEBI" id="CHEBI:85919"/>
        <dbReference type="EC" id="1.14.19.11"/>
    </reaction>
</comment>
<comment type="cofactor">
    <cofactor evidence="2">
        <name>Fe(2+)</name>
        <dbReference type="ChEBI" id="CHEBI:29033"/>
    </cofactor>
    <text evidence="2">Binds 2 Fe(2+) ions per subunit.</text>
</comment>
<comment type="subunit">
    <text evidence="2">Homodimer.</text>
</comment>
<comment type="subcellular location">
    <subcellularLocation>
        <location>Plastid</location>
        <location>Chloroplast</location>
    </subcellularLocation>
    <subcellularLocation>
        <location>Plastid</location>
    </subcellularLocation>
    <text>In green tissue, found in chloroplasts. In non-photosynthetic tissue, found in plastids.</text>
</comment>
<comment type="tissue specificity">
    <text>Found only in tissues which synthesize petroselinic acid, such as developing seeds.</text>
</comment>
<comment type="similarity">
    <text evidence="5">Belongs to the fatty acid desaturase type 2 family.</text>
</comment>
<sequence>MAMKLNALMTLQCPKRNMFTRIAPPQAGRVRSKVSMASTLHASPLVFDKLKAGRPEVDELFNSLEGWARDNILVHLKSVENSWQPQDYLPDPTSDAFEDQVKEMRERAKDIPDEYFVVLVGDMITEEALPTYMSMLNRCDGIKDDTGAQPTSWATWTRAWTAEENRHGDLLNKYLYLSGRVDMRMIEKTIQYLIGSGMDTKTENCPYMGFIYTSFQERATFISHANTAKLAQHYGDKNLAQVCGNIASDEKRHATAYTKIVEKLAEIDPDTTVIAFSDMMRKKIQMPAHAMYDGSDDMLFKHFTAVAQQIGVYSAWDYCDIIDFLVDKWNVAKMTGLSGEGRKAQEYVCSLAAKIRRVEEKVQGKEKKAVLPVAFSWIFNRQIII</sequence>
<protein>
    <recommendedName>
        <fullName>Palmitoyl-[acyl-carrier-protein] 4-desaturase, chloroplastic</fullName>
        <ecNumber evidence="3">1.14.19.11</ecNumber>
    </recommendedName>
    <alternativeName>
        <fullName>Acyl-[acyl-carrier-protein] desaturase</fullName>
    </alternativeName>
</protein>
<dbReference type="EC" id="1.14.19.11" evidence="3"/>
<dbReference type="EMBL" id="M93115">
    <property type="protein sequence ID" value="AAC63059.1"/>
    <property type="molecule type" value="mRNA"/>
</dbReference>
<dbReference type="PIR" id="A47245">
    <property type="entry name" value="A47245"/>
</dbReference>
<dbReference type="SMR" id="P32063"/>
<dbReference type="BioCyc" id="MetaCyc:MONOMER-12587"/>
<dbReference type="BRENDA" id="1.14.19.11">
    <property type="organism ID" value="1619"/>
</dbReference>
<dbReference type="GO" id="GO:0009570">
    <property type="term" value="C:chloroplast stroma"/>
    <property type="evidence" value="ECO:0007669"/>
    <property type="project" value="TreeGrafter"/>
</dbReference>
<dbReference type="GO" id="GO:0046872">
    <property type="term" value="F:metal ion binding"/>
    <property type="evidence" value="ECO:0007669"/>
    <property type="project" value="UniProtKB-KW"/>
</dbReference>
<dbReference type="GO" id="GO:0045300">
    <property type="term" value="F:stearoyl-[ACP] desaturase activity"/>
    <property type="evidence" value="ECO:0007669"/>
    <property type="project" value="InterPro"/>
</dbReference>
<dbReference type="GO" id="GO:0006633">
    <property type="term" value="P:fatty acid biosynthetic process"/>
    <property type="evidence" value="ECO:0007669"/>
    <property type="project" value="UniProtKB-KW"/>
</dbReference>
<dbReference type="CDD" id="cd01050">
    <property type="entry name" value="Acyl_ACP_Desat"/>
    <property type="match status" value="1"/>
</dbReference>
<dbReference type="FunFam" id="1.10.620.20:FF:000002">
    <property type="entry name" value="Stearoyl-[acyl-carrier-protein] 9-desaturase, chloroplastic"/>
    <property type="match status" value="1"/>
</dbReference>
<dbReference type="Gene3D" id="1.10.620.20">
    <property type="entry name" value="Ribonucleotide Reductase, subunit A"/>
    <property type="match status" value="1"/>
</dbReference>
<dbReference type="InterPro" id="IPR005803">
    <property type="entry name" value="FADS-2_CS"/>
</dbReference>
<dbReference type="InterPro" id="IPR005067">
    <property type="entry name" value="Fatty_acid_desaturase-2"/>
</dbReference>
<dbReference type="InterPro" id="IPR009078">
    <property type="entry name" value="Ferritin-like_SF"/>
</dbReference>
<dbReference type="InterPro" id="IPR012348">
    <property type="entry name" value="RNR-like"/>
</dbReference>
<dbReference type="PANTHER" id="PTHR31155">
    <property type="entry name" value="ACYL- ACYL-CARRIER-PROTEIN DESATURASE-RELATED"/>
    <property type="match status" value="1"/>
</dbReference>
<dbReference type="PANTHER" id="PTHR31155:SF9">
    <property type="entry name" value="STEAROYL-[ACYL-CARRIER-PROTEIN] 9-DESATURASE 7, CHLOROPLASTIC"/>
    <property type="match status" value="1"/>
</dbReference>
<dbReference type="Pfam" id="PF03405">
    <property type="entry name" value="FA_desaturase_2"/>
    <property type="match status" value="1"/>
</dbReference>
<dbReference type="PIRSF" id="PIRSF000346">
    <property type="entry name" value="Dlt9_acylACP_des"/>
    <property type="match status" value="1"/>
</dbReference>
<dbReference type="SUPFAM" id="SSF47240">
    <property type="entry name" value="Ferritin-like"/>
    <property type="match status" value="1"/>
</dbReference>
<dbReference type="PROSITE" id="PS00574">
    <property type="entry name" value="FATTY_ACID_DESATUR_2"/>
    <property type="match status" value="1"/>
</dbReference>
<name>STAD_CORSA</name>
<accession>P32063</accession>
<feature type="transit peptide" description="Chloroplast" evidence="1">
    <location>
        <begin position="1"/>
        <end position="36"/>
    </location>
</feature>
<feature type="chain" id="PRO_0000007143" description="Palmitoyl-[acyl-carrier-protein] 4-desaturase, chloroplastic">
    <location>
        <begin position="37"/>
        <end position="385"/>
    </location>
</feature>
<feature type="binding site" evidence="2">
    <location>
        <position position="126"/>
    </location>
    <ligand>
        <name>Fe cation</name>
        <dbReference type="ChEBI" id="CHEBI:24875"/>
        <label>1</label>
    </ligand>
</feature>
<feature type="binding site" evidence="2">
    <location>
        <position position="164"/>
    </location>
    <ligand>
        <name>Fe cation</name>
        <dbReference type="ChEBI" id="CHEBI:24875"/>
        <label>1</label>
    </ligand>
</feature>
<feature type="binding site" evidence="2">
    <location>
        <position position="164"/>
    </location>
    <ligand>
        <name>Fe cation</name>
        <dbReference type="ChEBI" id="CHEBI:24875"/>
        <label>2</label>
    </ligand>
</feature>
<feature type="binding site" evidence="2">
    <location>
        <position position="167"/>
    </location>
    <ligand>
        <name>Fe cation</name>
        <dbReference type="ChEBI" id="CHEBI:24875"/>
        <label>1</label>
    </ligand>
</feature>
<feature type="binding site" evidence="2">
    <location>
        <position position="217"/>
    </location>
    <ligand>
        <name>Fe cation</name>
        <dbReference type="ChEBI" id="CHEBI:24875"/>
        <label>2</label>
    </ligand>
</feature>
<feature type="binding site" evidence="2">
    <location>
        <position position="250"/>
    </location>
    <ligand>
        <name>Fe cation</name>
        <dbReference type="ChEBI" id="CHEBI:24875"/>
        <label>1</label>
    </ligand>
</feature>
<feature type="binding site" evidence="2">
    <location>
        <position position="250"/>
    </location>
    <ligand>
        <name>Fe cation</name>
        <dbReference type="ChEBI" id="CHEBI:24875"/>
        <label>2</label>
    </ligand>
</feature>
<feature type="binding site" evidence="2">
    <location>
        <position position="253"/>
    </location>
    <ligand>
        <name>Fe cation</name>
        <dbReference type="ChEBI" id="CHEBI:24875"/>
        <label>2</label>
    </ligand>
</feature>
<organism>
    <name type="scientific">Coriandrum sativum</name>
    <name type="common">Coriander</name>
    <name type="synonym">Chinese parsley</name>
    <dbReference type="NCBI Taxonomy" id="4047"/>
    <lineage>
        <taxon>Eukaryota</taxon>
        <taxon>Viridiplantae</taxon>
        <taxon>Streptophyta</taxon>
        <taxon>Embryophyta</taxon>
        <taxon>Tracheophyta</taxon>
        <taxon>Spermatophyta</taxon>
        <taxon>Magnoliopsida</taxon>
        <taxon>eudicotyledons</taxon>
        <taxon>Gunneridae</taxon>
        <taxon>Pentapetalae</taxon>
        <taxon>asterids</taxon>
        <taxon>campanulids</taxon>
        <taxon>Apiales</taxon>
        <taxon>Apiaceae</taxon>
        <taxon>Apioideae</taxon>
        <taxon>apioid superclade</taxon>
        <taxon>Coriandreae</taxon>
        <taxon>Coriandrum</taxon>
    </lineage>
</organism>
<proteinExistence type="evidence at protein level"/>
<evidence type="ECO:0000250" key="1">
    <source>
        <dbReference type="UniProtKB" id="P22243"/>
    </source>
</evidence>
<evidence type="ECO:0000250" key="2">
    <source>
        <dbReference type="UniProtKB" id="P22337"/>
    </source>
</evidence>
<evidence type="ECO:0000269" key="3">
    <source>
    </source>
</evidence>
<evidence type="ECO:0000269" key="4">
    <source>
    </source>
</evidence>
<evidence type="ECO:0000305" key="5"/>